<organism>
    <name type="scientific">Acinetobacter baumannii (strain ACICU)</name>
    <dbReference type="NCBI Taxonomy" id="405416"/>
    <lineage>
        <taxon>Bacteria</taxon>
        <taxon>Pseudomonadati</taxon>
        <taxon>Pseudomonadota</taxon>
        <taxon>Gammaproteobacteria</taxon>
        <taxon>Moraxellales</taxon>
        <taxon>Moraxellaceae</taxon>
        <taxon>Acinetobacter</taxon>
        <taxon>Acinetobacter calcoaceticus/baumannii complex</taxon>
    </lineage>
</organism>
<feature type="chain" id="PRO_1000124332" description="GTPase Der">
    <location>
        <begin position="1"/>
        <end position="469"/>
    </location>
</feature>
<feature type="domain" description="EngA-type G 1">
    <location>
        <begin position="3"/>
        <end position="166"/>
    </location>
</feature>
<feature type="domain" description="EngA-type G 2">
    <location>
        <begin position="177"/>
        <end position="350"/>
    </location>
</feature>
<feature type="domain" description="KH-like" evidence="1">
    <location>
        <begin position="351"/>
        <end position="435"/>
    </location>
</feature>
<feature type="binding site" evidence="1">
    <location>
        <begin position="9"/>
        <end position="16"/>
    </location>
    <ligand>
        <name>GTP</name>
        <dbReference type="ChEBI" id="CHEBI:37565"/>
        <label>1</label>
    </ligand>
</feature>
<feature type="binding site" evidence="1">
    <location>
        <begin position="56"/>
        <end position="60"/>
    </location>
    <ligand>
        <name>GTP</name>
        <dbReference type="ChEBI" id="CHEBI:37565"/>
        <label>1</label>
    </ligand>
</feature>
<feature type="binding site" evidence="1">
    <location>
        <begin position="118"/>
        <end position="121"/>
    </location>
    <ligand>
        <name>GTP</name>
        <dbReference type="ChEBI" id="CHEBI:37565"/>
        <label>1</label>
    </ligand>
</feature>
<feature type="binding site" evidence="1">
    <location>
        <begin position="183"/>
        <end position="190"/>
    </location>
    <ligand>
        <name>GTP</name>
        <dbReference type="ChEBI" id="CHEBI:37565"/>
        <label>2</label>
    </ligand>
</feature>
<feature type="binding site" evidence="1">
    <location>
        <begin position="230"/>
        <end position="234"/>
    </location>
    <ligand>
        <name>GTP</name>
        <dbReference type="ChEBI" id="CHEBI:37565"/>
        <label>2</label>
    </ligand>
</feature>
<feature type="binding site" evidence="1">
    <location>
        <begin position="295"/>
        <end position="298"/>
    </location>
    <ligand>
        <name>GTP</name>
        <dbReference type="ChEBI" id="CHEBI:37565"/>
        <label>2</label>
    </ligand>
</feature>
<keyword id="KW-0342">GTP-binding</keyword>
<keyword id="KW-0547">Nucleotide-binding</keyword>
<keyword id="KW-0677">Repeat</keyword>
<keyword id="KW-0690">Ribosome biogenesis</keyword>
<protein>
    <recommendedName>
        <fullName evidence="1">GTPase Der</fullName>
    </recommendedName>
    <alternativeName>
        <fullName evidence="1">GTP-binding protein EngA</fullName>
    </alternativeName>
</protein>
<evidence type="ECO:0000255" key="1">
    <source>
        <dbReference type="HAMAP-Rule" id="MF_00195"/>
    </source>
</evidence>
<reference key="1">
    <citation type="journal article" date="2008" name="Antimicrob. Agents Chemother.">
        <title>Whole-genome pyrosequencing of an epidemic multidrug-resistant Acinetobacter baumannii strain belonging to the European clone II group.</title>
        <authorList>
            <person name="Iacono M."/>
            <person name="Villa L."/>
            <person name="Fortini D."/>
            <person name="Bordoni R."/>
            <person name="Imperi F."/>
            <person name="Bonnal R.J."/>
            <person name="Sicheritz-Ponten T."/>
            <person name="De Bellis G."/>
            <person name="Visca P."/>
            <person name="Cassone A."/>
            <person name="Carattoli A."/>
        </authorList>
    </citation>
    <scope>NUCLEOTIDE SEQUENCE [LARGE SCALE GENOMIC DNA]</scope>
    <source>
        <strain>ACICU</strain>
    </source>
</reference>
<name>DER_ACIBC</name>
<comment type="function">
    <text evidence="1">GTPase that plays an essential role in the late steps of ribosome biogenesis.</text>
</comment>
<comment type="subunit">
    <text evidence="1">Associates with the 50S ribosomal subunit.</text>
</comment>
<comment type="similarity">
    <text evidence="1">Belongs to the TRAFAC class TrmE-Era-EngA-EngB-Septin-like GTPase superfamily. EngA (Der) GTPase family.</text>
</comment>
<sequence length="469" mass="52799">MKPVIALIGRPNVGKSTLFNQITKSRDALVADFAGLTRDRKYGDATYQNKSFIVVDTGGIGESEGGIDNYMAEQSKTAINEADIIIFVVDARAGLLASDEQIARELRTLGKKIYLVANKVDGVHAEAALVEFYKLGMGEPLQVAASHGRGVQQMLEDVLQDIPEDENPEEHDKDTGLRLAIIGRPNVGKSTLVNRLLGEDRVVAFDQPGTTRDSIYIPFEREGRKYTLIDTAGVRRKGKVDEMIEKFSIVKTLQAMKDAHVVVVVVDAREGIVEQDLHLIGYALEAGRAMVIAINKWDNMSEYDRKQCKLDVERRFDFIPWARIHLISALHGTGVGELYPSIHRAYESANLKVSPAKLTQILNDATDQHQPPTVQGRRIKMRYAHMGGQNPPTIVIHGNKVDKTPADYRRYLENVFRKVYKLEGTPVKIEFKTSENPFEGRKSQVDERTAARRRRYIQKFKKAEKKFKR</sequence>
<proteinExistence type="inferred from homology"/>
<dbReference type="EMBL" id="CP000863">
    <property type="protein sequence ID" value="ACC55828.1"/>
    <property type="molecule type" value="Genomic_DNA"/>
</dbReference>
<dbReference type="RefSeq" id="WP_000805592.1">
    <property type="nucleotide sequence ID" value="NZ_CP031380.1"/>
</dbReference>
<dbReference type="SMR" id="B2I3F0"/>
<dbReference type="GeneID" id="92892509"/>
<dbReference type="KEGG" id="abc:ACICU_00516"/>
<dbReference type="HOGENOM" id="CLU_016077_6_2_6"/>
<dbReference type="Proteomes" id="UP000008839">
    <property type="component" value="Chromosome"/>
</dbReference>
<dbReference type="GO" id="GO:0005525">
    <property type="term" value="F:GTP binding"/>
    <property type="evidence" value="ECO:0007669"/>
    <property type="project" value="UniProtKB-UniRule"/>
</dbReference>
<dbReference type="GO" id="GO:0043022">
    <property type="term" value="F:ribosome binding"/>
    <property type="evidence" value="ECO:0007669"/>
    <property type="project" value="TreeGrafter"/>
</dbReference>
<dbReference type="GO" id="GO:0042254">
    <property type="term" value="P:ribosome biogenesis"/>
    <property type="evidence" value="ECO:0007669"/>
    <property type="project" value="UniProtKB-KW"/>
</dbReference>
<dbReference type="CDD" id="cd01894">
    <property type="entry name" value="EngA1"/>
    <property type="match status" value="1"/>
</dbReference>
<dbReference type="CDD" id="cd01895">
    <property type="entry name" value="EngA2"/>
    <property type="match status" value="1"/>
</dbReference>
<dbReference type="FunFam" id="3.30.300.20:FF:000004">
    <property type="entry name" value="GTPase Der"/>
    <property type="match status" value="1"/>
</dbReference>
<dbReference type="FunFam" id="3.40.50.300:FF:000040">
    <property type="entry name" value="GTPase Der"/>
    <property type="match status" value="1"/>
</dbReference>
<dbReference type="FunFam" id="3.40.50.300:FF:000057">
    <property type="entry name" value="GTPase Der"/>
    <property type="match status" value="1"/>
</dbReference>
<dbReference type="Gene3D" id="3.30.300.20">
    <property type="match status" value="1"/>
</dbReference>
<dbReference type="Gene3D" id="3.40.50.300">
    <property type="entry name" value="P-loop containing nucleotide triphosphate hydrolases"/>
    <property type="match status" value="2"/>
</dbReference>
<dbReference type="HAMAP" id="MF_00195">
    <property type="entry name" value="GTPase_Der"/>
    <property type="match status" value="1"/>
</dbReference>
<dbReference type="InterPro" id="IPR031166">
    <property type="entry name" value="G_ENGA"/>
</dbReference>
<dbReference type="InterPro" id="IPR006073">
    <property type="entry name" value="GTP-bd"/>
</dbReference>
<dbReference type="InterPro" id="IPR016484">
    <property type="entry name" value="GTPase_Der"/>
</dbReference>
<dbReference type="InterPro" id="IPR032859">
    <property type="entry name" value="KH_dom-like"/>
</dbReference>
<dbReference type="InterPro" id="IPR015946">
    <property type="entry name" value="KH_dom-like_a/b"/>
</dbReference>
<dbReference type="InterPro" id="IPR027417">
    <property type="entry name" value="P-loop_NTPase"/>
</dbReference>
<dbReference type="InterPro" id="IPR005225">
    <property type="entry name" value="Small_GTP-bd"/>
</dbReference>
<dbReference type="NCBIfam" id="TIGR03594">
    <property type="entry name" value="GTPase_EngA"/>
    <property type="match status" value="1"/>
</dbReference>
<dbReference type="NCBIfam" id="TIGR00231">
    <property type="entry name" value="small_GTP"/>
    <property type="match status" value="2"/>
</dbReference>
<dbReference type="PANTHER" id="PTHR43834">
    <property type="entry name" value="GTPASE DER"/>
    <property type="match status" value="1"/>
</dbReference>
<dbReference type="PANTHER" id="PTHR43834:SF6">
    <property type="entry name" value="GTPASE DER"/>
    <property type="match status" value="1"/>
</dbReference>
<dbReference type="Pfam" id="PF14714">
    <property type="entry name" value="KH_dom-like"/>
    <property type="match status" value="1"/>
</dbReference>
<dbReference type="Pfam" id="PF01926">
    <property type="entry name" value="MMR_HSR1"/>
    <property type="match status" value="2"/>
</dbReference>
<dbReference type="PIRSF" id="PIRSF006485">
    <property type="entry name" value="GTP-binding_EngA"/>
    <property type="match status" value="1"/>
</dbReference>
<dbReference type="PRINTS" id="PR00326">
    <property type="entry name" value="GTP1OBG"/>
</dbReference>
<dbReference type="SUPFAM" id="SSF52540">
    <property type="entry name" value="P-loop containing nucleoside triphosphate hydrolases"/>
    <property type="match status" value="2"/>
</dbReference>
<dbReference type="PROSITE" id="PS51712">
    <property type="entry name" value="G_ENGA"/>
    <property type="match status" value="2"/>
</dbReference>
<gene>
    <name evidence="1" type="primary">der</name>
    <name type="synonym">engA</name>
    <name type="ordered locus">ACICU_00516</name>
</gene>
<accession>B2I3F0</accession>